<protein>
    <recommendedName>
        <fullName evidence="7">Zinc finger protein 777</fullName>
    </recommendedName>
</protein>
<organism>
    <name type="scientific">Homo sapiens</name>
    <name type="common">Human</name>
    <dbReference type="NCBI Taxonomy" id="9606"/>
    <lineage>
        <taxon>Eukaryota</taxon>
        <taxon>Metazoa</taxon>
        <taxon>Chordata</taxon>
        <taxon>Craniata</taxon>
        <taxon>Vertebrata</taxon>
        <taxon>Euteleostomi</taxon>
        <taxon>Mammalia</taxon>
        <taxon>Eutheria</taxon>
        <taxon>Euarchontoglires</taxon>
        <taxon>Primates</taxon>
        <taxon>Haplorrhini</taxon>
        <taxon>Catarrhini</taxon>
        <taxon>Hominidae</taxon>
        <taxon>Homo</taxon>
    </lineage>
</organism>
<sequence>MENQRSSPLSFPSVPQEETLRQAPAGLPRETLFQSRVLPPKEIPSLSPTIPRQGSLPQTSSAPKQETSGRMPHVLQKGPSLLCSAASEQETSLQGPLASQEGTQYPPPAAAEQEVSLLSHSPHHQEAPVHSPEAPEKDPLTLSPTVPETDMDPLLQSPVSQKDTPFQISSAVQKEQPLPTAEITRLAVWAAVQAVERKLEAQAMRLLTLEGRTGTNEKKIADCEKTAVEFANHLESKWVVLGTLLQEYGLLQRRLENMENLLKNRNFWILRLPPGSNGEVPKVPVTFDDVAVHFSEQEWGNLSEWQKELYKNVMRGNYESLVSMDYAISKPDLMSQMERGERPTMQEQEDSEEGETPTDPSAAHDGIVIKIEVQTNDEGSESLETPEPLMGQVEEHGFQDSELGDPCGEQPDLDMQEPENTLEESTEGSSEFSELKQMLVQQRNCTEGIVIKTEEQDEEEEEEEEDELPQHLQSLGQLSGRYEASMYQTPLPGEMSPEGEESPPPLQLGNPAVKRLAPSVHGERHLSENRGASSQQQRNRRGERPFTCMECGKSFRLKINLIIHQRNHIKEGPYECAECEISFRHKQQLTLHQRIHRVRGGCVSPERGPTFNPKHALKPRPKSPSSGSGGGGPKPYKCPECDSSFSHKSSLTKHQITHTGERPYTCPECKKSFRLHISLVIHQRVHAGKHEVSFICSLCGKSFSRPSHLLRHQRTHTGERPFKCPECEKSFSEKSKLTNHCRVHSRERPHACPECGKSFIRKHHLLEHRRIHTGERPYHCAECGKRFTQKHHLLEHQRAHTGERPYPCTHCAKCFRYKQSLKYHLRTHTGE</sequence>
<proteinExistence type="evidence at protein level"/>
<gene>
    <name evidence="8" type="primary">ZNF777</name>
    <name type="synonym">KIAA1285</name>
</gene>
<evidence type="ECO:0000255" key="1">
    <source>
        <dbReference type="PROSITE-ProRule" id="PRU00042"/>
    </source>
</evidence>
<evidence type="ECO:0000255" key="2">
    <source>
        <dbReference type="PROSITE-ProRule" id="PRU00119"/>
    </source>
</evidence>
<evidence type="ECO:0000256" key="3">
    <source>
        <dbReference type="SAM" id="MobiDB-lite"/>
    </source>
</evidence>
<evidence type="ECO:0000269" key="4">
    <source>
    </source>
</evidence>
<evidence type="ECO:0000269" key="5">
    <source>
    </source>
</evidence>
<evidence type="ECO:0000269" key="6">
    <source>
    </source>
</evidence>
<evidence type="ECO:0000305" key="7"/>
<evidence type="ECO:0000312" key="8">
    <source>
        <dbReference type="HGNC" id="HGNC:22213"/>
    </source>
</evidence>
<evidence type="ECO:0007744" key="9">
    <source>
    </source>
</evidence>
<evidence type="ECO:0007744" key="10">
    <source>
    </source>
</evidence>
<evidence type="ECO:0007744" key="11">
    <source>
    </source>
</evidence>
<evidence type="ECO:0007744" key="12">
    <source>
    </source>
</evidence>
<reference key="1">
    <citation type="journal article" date="2003" name="Nature">
        <title>The DNA sequence of human chromosome 7.</title>
        <authorList>
            <person name="Hillier L.W."/>
            <person name="Fulton R.S."/>
            <person name="Fulton L.A."/>
            <person name="Graves T.A."/>
            <person name="Pepin K.H."/>
            <person name="Wagner-McPherson C."/>
            <person name="Layman D."/>
            <person name="Maas J."/>
            <person name="Jaeger S."/>
            <person name="Walker R."/>
            <person name="Wylie K."/>
            <person name="Sekhon M."/>
            <person name="Becker M.C."/>
            <person name="O'Laughlin M.D."/>
            <person name="Schaller M.E."/>
            <person name="Fewell G.A."/>
            <person name="Delehaunty K.D."/>
            <person name="Miner T.L."/>
            <person name="Nash W.E."/>
            <person name="Cordes M."/>
            <person name="Du H."/>
            <person name="Sun H."/>
            <person name="Edwards J."/>
            <person name="Bradshaw-Cordum H."/>
            <person name="Ali J."/>
            <person name="Andrews S."/>
            <person name="Isak A."/>
            <person name="Vanbrunt A."/>
            <person name="Nguyen C."/>
            <person name="Du F."/>
            <person name="Lamar B."/>
            <person name="Courtney L."/>
            <person name="Kalicki J."/>
            <person name="Ozersky P."/>
            <person name="Bielicki L."/>
            <person name="Scott K."/>
            <person name="Holmes A."/>
            <person name="Harkins R."/>
            <person name="Harris A."/>
            <person name="Strong C.M."/>
            <person name="Hou S."/>
            <person name="Tomlinson C."/>
            <person name="Dauphin-Kohlberg S."/>
            <person name="Kozlowicz-Reilly A."/>
            <person name="Leonard S."/>
            <person name="Rohlfing T."/>
            <person name="Rock S.M."/>
            <person name="Tin-Wollam A.-M."/>
            <person name="Abbott A."/>
            <person name="Minx P."/>
            <person name="Maupin R."/>
            <person name="Strowmatt C."/>
            <person name="Latreille P."/>
            <person name="Miller N."/>
            <person name="Johnson D."/>
            <person name="Murray J."/>
            <person name="Woessner J.P."/>
            <person name="Wendl M.C."/>
            <person name="Yang S.-P."/>
            <person name="Schultz B.R."/>
            <person name="Wallis J.W."/>
            <person name="Spieth J."/>
            <person name="Bieri T.A."/>
            <person name="Nelson J.O."/>
            <person name="Berkowicz N."/>
            <person name="Wohldmann P.E."/>
            <person name="Cook L.L."/>
            <person name="Hickenbotham M.T."/>
            <person name="Eldred J."/>
            <person name="Williams D."/>
            <person name="Bedell J.A."/>
            <person name="Mardis E.R."/>
            <person name="Clifton S.W."/>
            <person name="Chissoe S.L."/>
            <person name="Marra M.A."/>
            <person name="Raymond C."/>
            <person name="Haugen E."/>
            <person name="Gillett W."/>
            <person name="Zhou Y."/>
            <person name="James R."/>
            <person name="Phelps K."/>
            <person name="Iadanoto S."/>
            <person name="Bubb K."/>
            <person name="Simms E."/>
            <person name="Levy R."/>
            <person name="Clendenning J."/>
            <person name="Kaul R."/>
            <person name="Kent W.J."/>
            <person name="Furey T.S."/>
            <person name="Baertsch R.A."/>
            <person name="Brent M.R."/>
            <person name="Keibler E."/>
            <person name="Flicek P."/>
            <person name="Bork P."/>
            <person name="Suyama M."/>
            <person name="Bailey J.A."/>
            <person name="Portnoy M.E."/>
            <person name="Torrents D."/>
            <person name="Chinwalla A.T."/>
            <person name="Gish W.R."/>
            <person name="Eddy S.R."/>
            <person name="McPherson J.D."/>
            <person name="Olson M.V."/>
            <person name="Eichler E.E."/>
            <person name="Green E.D."/>
            <person name="Waterston R.H."/>
            <person name="Wilson R.K."/>
        </authorList>
    </citation>
    <scope>NUCLEOTIDE SEQUENCE [LARGE SCALE GENOMIC DNA]</scope>
</reference>
<reference key="2">
    <citation type="journal article" date="1999" name="DNA Res.">
        <title>Prediction of the coding sequences of unidentified human genes. XV. The complete sequences of 100 new cDNA clones from brain which code for large proteins in vitro.</title>
        <authorList>
            <person name="Nagase T."/>
            <person name="Ishikawa K."/>
            <person name="Kikuno R."/>
            <person name="Hirosawa M."/>
            <person name="Nomura N."/>
            <person name="Ohara O."/>
        </authorList>
    </citation>
    <scope>NUCLEOTIDE SEQUENCE [LARGE SCALE MRNA] OF 1-749</scope>
    <source>
        <tissue>Brain</tissue>
    </source>
</reference>
<reference key="3">
    <citation type="journal article" date="2004" name="Genome Res.">
        <title>The status, quality, and expansion of the NIH full-length cDNA project: the Mammalian Gene Collection (MGC).</title>
        <authorList>
            <consortium name="The MGC Project Team"/>
        </authorList>
    </citation>
    <scope>NUCLEOTIDE SEQUENCE [LARGE SCALE MRNA] OF 259-831</scope>
    <scope>VARIANT THR-512</scope>
    <source>
        <tissue>Lung</tissue>
    </source>
</reference>
<reference key="4">
    <citation type="journal article" date="2004" name="Nat. Genet.">
        <title>Complete sequencing and characterization of 21,243 full-length human cDNAs.</title>
        <authorList>
            <person name="Ota T."/>
            <person name="Suzuki Y."/>
            <person name="Nishikawa T."/>
            <person name="Otsuki T."/>
            <person name="Sugiyama T."/>
            <person name="Irie R."/>
            <person name="Wakamatsu A."/>
            <person name="Hayashi K."/>
            <person name="Sato H."/>
            <person name="Nagai K."/>
            <person name="Kimura K."/>
            <person name="Makita H."/>
            <person name="Sekine M."/>
            <person name="Obayashi M."/>
            <person name="Nishi T."/>
            <person name="Shibahara T."/>
            <person name="Tanaka T."/>
            <person name="Ishii S."/>
            <person name="Yamamoto J."/>
            <person name="Saito K."/>
            <person name="Kawai Y."/>
            <person name="Isono Y."/>
            <person name="Nakamura Y."/>
            <person name="Nagahari K."/>
            <person name="Murakami K."/>
            <person name="Yasuda T."/>
            <person name="Iwayanagi T."/>
            <person name="Wagatsuma M."/>
            <person name="Shiratori A."/>
            <person name="Sudo H."/>
            <person name="Hosoiri T."/>
            <person name="Kaku Y."/>
            <person name="Kodaira H."/>
            <person name="Kondo H."/>
            <person name="Sugawara M."/>
            <person name="Takahashi M."/>
            <person name="Kanda K."/>
            <person name="Yokoi T."/>
            <person name="Furuya T."/>
            <person name="Kikkawa E."/>
            <person name="Omura Y."/>
            <person name="Abe K."/>
            <person name="Kamihara K."/>
            <person name="Katsuta N."/>
            <person name="Sato K."/>
            <person name="Tanikawa M."/>
            <person name="Yamazaki M."/>
            <person name="Ninomiya K."/>
            <person name="Ishibashi T."/>
            <person name="Yamashita H."/>
            <person name="Murakawa K."/>
            <person name="Fujimori K."/>
            <person name="Tanai H."/>
            <person name="Kimata M."/>
            <person name="Watanabe M."/>
            <person name="Hiraoka S."/>
            <person name="Chiba Y."/>
            <person name="Ishida S."/>
            <person name="Ono Y."/>
            <person name="Takiguchi S."/>
            <person name="Watanabe S."/>
            <person name="Yosida M."/>
            <person name="Hotuta T."/>
            <person name="Kusano J."/>
            <person name="Kanehori K."/>
            <person name="Takahashi-Fujii A."/>
            <person name="Hara H."/>
            <person name="Tanase T.-O."/>
            <person name="Nomura Y."/>
            <person name="Togiya S."/>
            <person name="Komai F."/>
            <person name="Hara R."/>
            <person name="Takeuchi K."/>
            <person name="Arita M."/>
            <person name="Imose N."/>
            <person name="Musashino K."/>
            <person name="Yuuki H."/>
            <person name="Oshima A."/>
            <person name="Sasaki N."/>
            <person name="Aotsuka S."/>
            <person name="Yoshikawa Y."/>
            <person name="Matsunawa H."/>
            <person name="Ichihara T."/>
            <person name="Shiohata N."/>
            <person name="Sano S."/>
            <person name="Moriya S."/>
            <person name="Momiyama H."/>
            <person name="Satoh N."/>
            <person name="Takami S."/>
            <person name="Terashima Y."/>
            <person name="Suzuki O."/>
            <person name="Nakagawa S."/>
            <person name="Senoh A."/>
            <person name="Mizoguchi H."/>
            <person name="Goto Y."/>
            <person name="Shimizu F."/>
            <person name="Wakebe H."/>
            <person name="Hishigaki H."/>
            <person name="Watanabe T."/>
            <person name="Sugiyama A."/>
            <person name="Takemoto M."/>
            <person name="Kawakami B."/>
            <person name="Yamazaki M."/>
            <person name="Watanabe K."/>
            <person name="Kumagai A."/>
            <person name="Itakura S."/>
            <person name="Fukuzumi Y."/>
            <person name="Fujimori Y."/>
            <person name="Komiyama M."/>
            <person name="Tashiro H."/>
            <person name="Tanigami A."/>
            <person name="Fujiwara T."/>
            <person name="Ono T."/>
            <person name="Yamada K."/>
            <person name="Fujii Y."/>
            <person name="Ozaki K."/>
            <person name="Hirao M."/>
            <person name="Ohmori Y."/>
            <person name="Kawabata A."/>
            <person name="Hikiji T."/>
            <person name="Kobatake N."/>
            <person name="Inagaki H."/>
            <person name="Ikema Y."/>
            <person name="Okamoto S."/>
            <person name="Okitani R."/>
            <person name="Kawakami T."/>
            <person name="Noguchi S."/>
            <person name="Itoh T."/>
            <person name="Shigeta K."/>
            <person name="Senba T."/>
            <person name="Matsumura K."/>
            <person name="Nakajima Y."/>
            <person name="Mizuno T."/>
            <person name="Morinaga M."/>
            <person name="Sasaki M."/>
            <person name="Togashi T."/>
            <person name="Oyama M."/>
            <person name="Hata H."/>
            <person name="Watanabe M."/>
            <person name="Komatsu T."/>
            <person name="Mizushima-Sugano J."/>
            <person name="Satoh T."/>
            <person name="Shirai Y."/>
            <person name="Takahashi Y."/>
            <person name="Nakagawa K."/>
            <person name="Okumura K."/>
            <person name="Nagase T."/>
            <person name="Nomura N."/>
            <person name="Kikuchi H."/>
            <person name="Masuho Y."/>
            <person name="Yamashita R."/>
            <person name="Nakai K."/>
            <person name="Yada T."/>
            <person name="Nakamura Y."/>
            <person name="Ohara O."/>
            <person name="Isogai T."/>
            <person name="Sugano S."/>
        </authorList>
    </citation>
    <scope>NUCLEOTIDE SEQUENCE [LARGE SCALE MRNA] OF 318-831</scope>
    <source>
        <tissue>Embryo</tissue>
    </source>
</reference>
<reference key="5">
    <citation type="journal article" date="2009" name="Sci. Signal.">
        <title>Quantitative phosphoproteomic analysis of T cell receptor signaling reveals system-wide modulation of protein-protein interactions.</title>
        <authorList>
            <person name="Mayya V."/>
            <person name="Lundgren D.H."/>
            <person name="Hwang S.-I."/>
            <person name="Rezaul K."/>
            <person name="Wu L."/>
            <person name="Eng J.K."/>
            <person name="Rodionov V."/>
            <person name="Han D.K."/>
        </authorList>
    </citation>
    <scope>PHOSPHORYLATION [LARGE SCALE ANALYSIS] AT SER-496 AND SER-502</scope>
    <scope>IDENTIFICATION BY MASS SPECTROMETRY [LARGE SCALE ANALYSIS]</scope>
    <source>
        <tissue>Leukemic T-cell</tissue>
    </source>
</reference>
<reference key="6">
    <citation type="journal article" date="2013" name="J. Proteome Res.">
        <title>Toward a comprehensive characterization of a human cancer cell phosphoproteome.</title>
        <authorList>
            <person name="Zhou H."/>
            <person name="Di Palma S."/>
            <person name="Preisinger C."/>
            <person name="Peng M."/>
            <person name="Polat A.N."/>
            <person name="Heck A.J."/>
            <person name="Mohammed S."/>
        </authorList>
    </citation>
    <scope>PHOSPHORYLATION [LARGE SCALE ANALYSIS] AT SER-47; SER-604 AND SER-623</scope>
    <scope>IDENTIFICATION BY MASS SPECTROMETRY [LARGE SCALE ANALYSIS]</scope>
    <source>
        <tissue>Erythroleukemia</tissue>
    </source>
</reference>
<reference key="7">
    <citation type="journal article" date="2014" name="J. Proteomics">
        <title>An enzyme assisted RP-RPLC approach for in-depth analysis of human liver phosphoproteome.</title>
        <authorList>
            <person name="Bian Y."/>
            <person name="Song C."/>
            <person name="Cheng K."/>
            <person name="Dong M."/>
            <person name="Wang F."/>
            <person name="Huang J."/>
            <person name="Sun D."/>
            <person name="Wang L."/>
            <person name="Ye M."/>
            <person name="Zou H."/>
        </authorList>
    </citation>
    <scope>PHOSPHORYLATION [LARGE SCALE ANALYSIS] AT SER-157</scope>
    <scope>IDENTIFICATION BY MASS SPECTROMETRY [LARGE SCALE ANALYSIS]</scope>
    <source>
        <tissue>Liver</tissue>
    </source>
</reference>
<reference key="8">
    <citation type="journal article" date="2015" name="J. Cell. Biochem.">
        <title>Overexpression of zinc-finger protein 777 (ZNF777) inhibits proliferation at low cell density through down-regulation of FAM129A.</title>
        <authorList>
            <person name="Yuki R."/>
            <person name="Aoyama K."/>
            <person name="Kubota S."/>
            <person name="Yamaguchi N."/>
            <person name="Kubota S."/>
            <person name="Hasegawa H."/>
            <person name="Morii M."/>
            <person name="Huang X."/>
            <person name="Liu K."/>
            <person name="Williams R."/>
            <person name="Fukuda M.N."/>
            <person name="Yamaguchi N."/>
        </authorList>
    </citation>
    <scope>FUNCTION</scope>
    <scope>SUBCELLULAR LOCATION</scope>
</reference>
<reference key="9">
    <citation type="journal article" date="2017" name="Nat. Struct. Mol. Biol.">
        <title>Site-specific mapping of the human SUMO proteome reveals co-modification with phosphorylation.</title>
        <authorList>
            <person name="Hendriks I.A."/>
            <person name="Lyon D."/>
            <person name="Young C."/>
            <person name="Jensen L.J."/>
            <person name="Vertegaal A.C."/>
            <person name="Nielsen M.L."/>
        </authorList>
    </citation>
    <scope>SUMOYLATION [LARGE SCALE ANALYSIS] AT LYS-330 AND LYS-452</scope>
    <scope>IDENTIFICATION BY MASS SPECTROMETRY [LARGE SCALE ANALYSIS]</scope>
</reference>
<reference key="10">
    <citation type="journal article" date="2019" name="BMC Mol. Cell Biol.">
        <title>DUF3669, a 'domain of unknown function' within ZNF746 and ZNF777, oligomerizes and contributes to transcriptional repression.</title>
        <authorList>
            <person name="Al Chiblak M."/>
            <person name="Steinbeck F."/>
            <person name="Thiesen H.J."/>
            <person name="Lorenz P."/>
        </authorList>
    </citation>
    <scope>FUNCTION</scope>
    <scope>SUBUNIT</scope>
</reference>
<comment type="function">
    <text evidence="5 6">May be involved in transcriptional repression (PubMed:31856708). Inhibits cell proliferation through CDKN1A/p21 induction by down-regulation of NIBAN1/FAM129A at low cell density (PubMed:25560148).</text>
</comment>
<comment type="subunit">
    <text evidence="6">Heterooligomer with ZNF746.</text>
</comment>
<comment type="interaction">
    <interactant intactId="EBI-11975599">
        <id>Q9ULD5</id>
    </interactant>
    <interactant intactId="EBI-739624">
        <id>Q8NHQ1</id>
        <label>CEP70</label>
    </interactant>
    <organismsDiffer>false</organismsDiffer>
    <experiments>3</experiments>
</comment>
<comment type="interaction">
    <interactant intactId="EBI-11975599">
        <id>Q9ULD5</id>
    </interactant>
    <interactant intactId="EBI-745579">
        <id>P49761</id>
        <label>CLK3</label>
    </interactant>
    <organismsDiffer>false</organismsDiffer>
    <experiments>3</experiments>
</comment>
<comment type="interaction">
    <interactant intactId="EBI-11975599">
        <id>Q9ULD5</id>
    </interactant>
    <interactant intactId="EBI-10175124">
        <id>Q8IZU0</id>
        <label>FAM9B</label>
    </interactant>
    <organismsDiffer>false</organismsDiffer>
    <experiments>4</experiments>
</comment>
<comment type="interaction">
    <interactant intactId="EBI-11975599">
        <id>Q9ULD5</id>
    </interactant>
    <interactant intactId="EBI-5661036">
        <id>A1L4K1</id>
        <label>FSD2</label>
    </interactant>
    <organismsDiffer>false</organismsDiffer>
    <experiments>3</experiments>
</comment>
<comment type="interaction">
    <interactant intactId="EBI-11975599">
        <id>Q9ULD5</id>
    </interactant>
    <interactant intactId="EBI-17178971">
        <id>Q14005-2</id>
        <label>IL16</label>
    </interactant>
    <organismsDiffer>false</organismsDiffer>
    <experiments>6</experiments>
</comment>
<comment type="interaction">
    <interactant intactId="EBI-11975599">
        <id>Q9ULD5</id>
    </interactant>
    <interactant intactId="EBI-2805604">
        <id>Q2KHM9</id>
        <label>KIAA0753</label>
    </interactant>
    <organismsDiffer>false</organismsDiffer>
    <experiments>3</experiments>
</comment>
<comment type="interaction">
    <interactant intactId="EBI-11975599">
        <id>Q9ULD5</id>
    </interactant>
    <interactant intactId="EBI-10172052">
        <id>P60411</id>
        <label>KRTAP10-9</label>
    </interactant>
    <organismsDiffer>false</organismsDiffer>
    <experiments>3</experiments>
</comment>
<comment type="interaction">
    <interactant intactId="EBI-11975599">
        <id>Q9ULD5</id>
    </interactant>
    <interactant intactId="EBI-1105213">
        <id>Q9UBB9</id>
        <label>TFIP11</label>
    </interactant>
    <organismsDiffer>false</organismsDiffer>
    <experiments>3</experiments>
</comment>
<comment type="subcellular location">
    <subcellularLocation>
        <location evidence="5">Nucleus</location>
    </subcellularLocation>
</comment>
<comment type="similarity">
    <text evidence="7">Belongs to the krueppel C2H2-type zinc-finger protein family.</text>
</comment>
<comment type="sequence caution" evidence="7">
    <conflict type="erroneous initiation">
        <sequence resource="EMBL-CDS" id="AAH23985"/>
    </conflict>
    <text>Truncated N-terminus.</text>
</comment>
<comment type="sequence caution" evidence="7">
    <conflict type="erroneous initiation">
        <sequence resource="EMBL-CDS" id="BAA86599"/>
    </conflict>
    <text>Extended N-terminus.</text>
</comment>
<comment type="sequence caution" evidence="7">
    <conflict type="miscellaneous discrepancy">
        <sequence resource="EMBL-CDS" id="BAA86599"/>
    </conflict>
    <text>Contaminating sequence. Vector contamination at the C-terminus.</text>
</comment>
<comment type="sequence caution" evidence="7">
    <conflict type="erroneous initiation">
        <sequence resource="EMBL-CDS" id="BAC11033"/>
    </conflict>
    <text>Truncated N-terminus.</text>
</comment>
<accession>Q9ULD5</accession>
<accession>Q8N2R2</accession>
<accession>Q8N659</accession>
<feature type="chain" id="PRO_0000293692" description="Zinc finger protein 777">
    <location>
        <begin position="1"/>
        <end position="831"/>
    </location>
</feature>
<feature type="domain" description="KRAB" evidence="2">
    <location>
        <begin position="285"/>
        <end position="356"/>
    </location>
</feature>
<feature type="zinc finger region" description="C2H2-type 1" evidence="1">
    <location>
        <begin position="546"/>
        <end position="568"/>
    </location>
</feature>
<feature type="zinc finger region" description="C2H2-type 2" evidence="1">
    <location>
        <begin position="574"/>
        <end position="596"/>
    </location>
</feature>
<feature type="zinc finger region" description="C2H2-type 3" evidence="1">
    <location>
        <begin position="636"/>
        <end position="658"/>
    </location>
</feature>
<feature type="zinc finger region" description="C2H2-type 4" evidence="1">
    <location>
        <begin position="664"/>
        <end position="686"/>
    </location>
</feature>
<feature type="zinc finger region" description="C2H2-type 5" evidence="1">
    <location>
        <begin position="694"/>
        <end position="716"/>
    </location>
</feature>
<feature type="zinc finger region" description="C2H2-type 6" evidence="1">
    <location>
        <begin position="722"/>
        <end position="744"/>
    </location>
</feature>
<feature type="zinc finger region" description="C2H2-type 7" evidence="1">
    <location>
        <begin position="750"/>
        <end position="772"/>
    </location>
</feature>
<feature type="zinc finger region" description="C2H2-type 8" evidence="1">
    <location>
        <begin position="778"/>
        <end position="800"/>
    </location>
</feature>
<feature type="zinc finger region" description="C2H2-type 9" evidence="1">
    <location>
        <begin position="806"/>
        <end position="828"/>
    </location>
</feature>
<feature type="region of interest" description="Disordered" evidence="3">
    <location>
        <begin position="1"/>
        <end position="143"/>
    </location>
</feature>
<feature type="region of interest" description="Disordered" evidence="3">
    <location>
        <begin position="339"/>
        <end position="364"/>
    </location>
</feature>
<feature type="region of interest" description="Disordered" evidence="3">
    <location>
        <begin position="398"/>
        <end position="432"/>
    </location>
</feature>
<feature type="region of interest" description="Disordered" evidence="3">
    <location>
        <begin position="488"/>
        <end position="545"/>
    </location>
</feature>
<feature type="region of interest" description="Disordered" evidence="3">
    <location>
        <begin position="600"/>
        <end position="634"/>
    </location>
</feature>
<feature type="compositionally biased region" description="Polar residues" evidence="3">
    <location>
        <begin position="1"/>
        <end position="10"/>
    </location>
</feature>
<feature type="compositionally biased region" description="Polar residues" evidence="3">
    <location>
        <begin position="46"/>
        <end position="68"/>
    </location>
</feature>
<feature type="compositionally biased region" description="Basic and acidic residues" evidence="3">
    <location>
        <begin position="123"/>
        <end position="139"/>
    </location>
</feature>
<feature type="compositionally biased region" description="Acidic residues" evidence="3">
    <location>
        <begin position="347"/>
        <end position="356"/>
    </location>
</feature>
<feature type="compositionally biased region" description="Acidic residues" evidence="3">
    <location>
        <begin position="411"/>
        <end position="426"/>
    </location>
</feature>
<feature type="modified residue" description="Phosphoserine" evidence="10">
    <location>
        <position position="47"/>
    </location>
</feature>
<feature type="modified residue" description="Phosphoserine" evidence="11">
    <location>
        <position position="157"/>
    </location>
</feature>
<feature type="modified residue" description="Phosphoserine" evidence="9">
    <location>
        <position position="496"/>
    </location>
</feature>
<feature type="modified residue" description="Phosphoserine" evidence="9">
    <location>
        <position position="502"/>
    </location>
</feature>
<feature type="modified residue" description="Phosphoserine" evidence="10">
    <location>
        <position position="604"/>
    </location>
</feature>
<feature type="modified residue" description="Phosphoserine" evidence="10">
    <location>
        <position position="623"/>
    </location>
</feature>
<feature type="cross-link" description="Glycyl lysine isopeptide (Lys-Gly) (interchain with G-Cter in SUMO2)" evidence="12">
    <location>
        <position position="330"/>
    </location>
</feature>
<feature type="cross-link" description="Glycyl lysine isopeptide (Lys-Gly) (interchain with G-Cter in SUMO2)" evidence="12">
    <location>
        <position position="452"/>
    </location>
</feature>
<feature type="sequence variant" id="VAR_057451" description="In dbSNP:rs3735318.">
    <original>R</original>
    <variation>W</variation>
    <location>
        <position position="70"/>
    </location>
</feature>
<feature type="sequence variant" id="VAR_057452" description="In dbSNP:rs3735319.">
    <original>V</original>
    <variation>A</variation>
    <location>
        <position position="115"/>
    </location>
</feature>
<feature type="sequence variant" id="VAR_061965" description="In dbSNP:rs17852167." evidence="4">
    <original>A</original>
    <variation>T</variation>
    <location>
        <position position="512"/>
    </location>
</feature>
<feature type="sequence conflict" description="In Ref. 4; BAC11033." evidence="7" ref="4">
    <original>T</original>
    <variation>TA</variation>
    <location>
        <position position="446"/>
    </location>
</feature>
<dbReference type="EMBL" id="AC073314">
    <property type="status" value="NOT_ANNOTATED_CDS"/>
    <property type="molecule type" value="Genomic_DNA"/>
</dbReference>
<dbReference type="EMBL" id="AB033111">
    <property type="protein sequence ID" value="BAA86599.1"/>
    <property type="status" value="ALT_SEQ"/>
    <property type="molecule type" value="mRNA"/>
</dbReference>
<dbReference type="EMBL" id="BC023985">
    <property type="protein sequence ID" value="AAH23985.2"/>
    <property type="status" value="ALT_INIT"/>
    <property type="molecule type" value="mRNA"/>
</dbReference>
<dbReference type="EMBL" id="AK074515">
    <property type="protein sequence ID" value="BAC11033.1"/>
    <property type="status" value="ALT_INIT"/>
    <property type="molecule type" value="mRNA"/>
</dbReference>
<dbReference type="CCDS" id="CCDS43675.1"/>
<dbReference type="RefSeq" id="NP_056509.2">
    <property type="nucleotide sequence ID" value="NM_015694.3"/>
</dbReference>
<dbReference type="RefSeq" id="XP_011514357.1">
    <property type="nucleotide sequence ID" value="XM_011516055.2"/>
</dbReference>
<dbReference type="SMR" id="Q9ULD5"/>
<dbReference type="BioGRID" id="118035">
    <property type="interactions" value="99"/>
</dbReference>
<dbReference type="FunCoup" id="Q9ULD5">
    <property type="interactions" value="872"/>
</dbReference>
<dbReference type="IntAct" id="Q9ULD5">
    <property type="interactions" value="90"/>
</dbReference>
<dbReference type="STRING" id="9606.ENSP00000247930"/>
<dbReference type="GlyGen" id="Q9ULD5">
    <property type="glycosylation" value="2 sites, 1 O-linked glycan (1 site)"/>
</dbReference>
<dbReference type="iPTMnet" id="Q9ULD5"/>
<dbReference type="PhosphoSitePlus" id="Q9ULD5"/>
<dbReference type="BioMuta" id="ZNF777"/>
<dbReference type="DMDM" id="152112417"/>
<dbReference type="jPOST" id="Q9ULD5"/>
<dbReference type="MassIVE" id="Q9ULD5"/>
<dbReference type="PaxDb" id="9606-ENSP00000247930"/>
<dbReference type="PeptideAtlas" id="Q9ULD5"/>
<dbReference type="Antibodypedia" id="827">
    <property type="antibodies" value="74 antibodies from 18 providers"/>
</dbReference>
<dbReference type="DNASU" id="27153"/>
<dbReference type="Ensembl" id="ENST00000247930.5">
    <property type="protein sequence ID" value="ENSP00000247930.4"/>
    <property type="gene ID" value="ENSG00000196453.8"/>
</dbReference>
<dbReference type="GeneID" id="27153"/>
<dbReference type="KEGG" id="hsa:27153"/>
<dbReference type="MANE-Select" id="ENST00000247930.5">
    <property type="protein sequence ID" value="ENSP00000247930.4"/>
    <property type="RefSeq nucleotide sequence ID" value="NM_015694.3"/>
    <property type="RefSeq protein sequence ID" value="NP_056509.2"/>
</dbReference>
<dbReference type="UCSC" id="uc003wfv.4">
    <property type="organism name" value="human"/>
</dbReference>
<dbReference type="AGR" id="HGNC:22213"/>
<dbReference type="CTD" id="27153"/>
<dbReference type="DisGeNET" id="27153"/>
<dbReference type="GeneCards" id="ZNF777"/>
<dbReference type="HGNC" id="HGNC:22213">
    <property type="gene designation" value="ZNF777"/>
</dbReference>
<dbReference type="HPA" id="ENSG00000196453">
    <property type="expression patterns" value="Low tissue specificity"/>
</dbReference>
<dbReference type="MIM" id="619298">
    <property type="type" value="gene"/>
</dbReference>
<dbReference type="neXtProt" id="NX_Q9ULD5"/>
<dbReference type="OpenTargets" id="ENSG00000196453"/>
<dbReference type="PharmGKB" id="PA162410383"/>
<dbReference type="VEuPathDB" id="HostDB:ENSG00000196453"/>
<dbReference type="eggNOG" id="KOG1721">
    <property type="taxonomic scope" value="Eukaryota"/>
</dbReference>
<dbReference type="GeneTree" id="ENSGT00940000155153"/>
<dbReference type="HOGENOM" id="CLU_002678_76_2_1"/>
<dbReference type="InParanoid" id="Q9ULD5"/>
<dbReference type="OMA" id="ERGPAFN"/>
<dbReference type="OrthoDB" id="654211at2759"/>
<dbReference type="PAN-GO" id="Q9ULD5">
    <property type="GO annotations" value="4 GO annotations based on evolutionary models"/>
</dbReference>
<dbReference type="PhylomeDB" id="Q9ULD5"/>
<dbReference type="TreeFam" id="TF337777"/>
<dbReference type="PathwayCommons" id="Q9ULD5"/>
<dbReference type="Reactome" id="R-HSA-212436">
    <property type="pathway name" value="Generic Transcription Pathway"/>
</dbReference>
<dbReference type="SignaLink" id="Q9ULD5"/>
<dbReference type="BioGRID-ORCS" id="27153">
    <property type="hits" value="32 hits in 1176 CRISPR screens"/>
</dbReference>
<dbReference type="GenomeRNAi" id="27153"/>
<dbReference type="Pharos" id="Q9ULD5">
    <property type="development level" value="Tdark"/>
</dbReference>
<dbReference type="PRO" id="PR:Q9ULD5"/>
<dbReference type="Proteomes" id="UP000005640">
    <property type="component" value="Chromosome 7"/>
</dbReference>
<dbReference type="RNAct" id="Q9ULD5">
    <property type="molecule type" value="protein"/>
</dbReference>
<dbReference type="Bgee" id="ENSG00000196453">
    <property type="expression patterns" value="Expressed in endothelial cell and 149 other cell types or tissues"/>
</dbReference>
<dbReference type="GO" id="GO:0005634">
    <property type="term" value="C:nucleus"/>
    <property type="evidence" value="ECO:0000314"/>
    <property type="project" value="UniProtKB"/>
</dbReference>
<dbReference type="GO" id="GO:0003700">
    <property type="term" value="F:DNA-binding transcription factor activity"/>
    <property type="evidence" value="ECO:0000303"/>
    <property type="project" value="ARUK-UCL"/>
</dbReference>
<dbReference type="GO" id="GO:0000981">
    <property type="term" value="F:DNA-binding transcription factor activity, RNA polymerase II-specific"/>
    <property type="evidence" value="ECO:0000318"/>
    <property type="project" value="GO_Central"/>
</dbReference>
<dbReference type="GO" id="GO:0000978">
    <property type="term" value="F:RNA polymerase II cis-regulatory region sequence-specific DNA binding"/>
    <property type="evidence" value="ECO:0000318"/>
    <property type="project" value="GO_Central"/>
</dbReference>
<dbReference type="GO" id="GO:0008270">
    <property type="term" value="F:zinc ion binding"/>
    <property type="evidence" value="ECO:0007669"/>
    <property type="project" value="UniProtKB-KW"/>
</dbReference>
<dbReference type="GO" id="GO:0008285">
    <property type="term" value="P:negative regulation of cell population proliferation"/>
    <property type="evidence" value="ECO:0000315"/>
    <property type="project" value="UniProtKB"/>
</dbReference>
<dbReference type="GO" id="GO:0045892">
    <property type="term" value="P:negative regulation of DNA-templated transcription"/>
    <property type="evidence" value="ECO:0000315"/>
    <property type="project" value="UniProtKB"/>
</dbReference>
<dbReference type="GO" id="GO:0051291">
    <property type="term" value="P:protein heterooligomerization"/>
    <property type="evidence" value="ECO:0000314"/>
    <property type="project" value="UniProtKB"/>
</dbReference>
<dbReference type="GO" id="GO:0006357">
    <property type="term" value="P:regulation of transcription by RNA polymerase II"/>
    <property type="evidence" value="ECO:0000318"/>
    <property type="project" value="GO_Central"/>
</dbReference>
<dbReference type="CDD" id="cd07765">
    <property type="entry name" value="KRAB_A-box"/>
    <property type="match status" value="1"/>
</dbReference>
<dbReference type="FunFam" id="3.30.160.60:FF:000045">
    <property type="entry name" value="ZFP69 zinc finger protein B"/>
    <property type="match status" value="1"/>
</dbReference>
<dbReference type="FunFam" id="3.30.160.60:FF:000706">
    <property type="entry name" value="Zinc finger protein"/>
    <property type="match status" value="1"/>
</dbReference>
<dbReference type="FunFam" id="3.30.160.60:FF:000320">
    <property type="entry name" value="Zinc finger protein 777"/>
    <property type="match status" value="1"/>
</dbReference>
<dbReference type="FunFam" id="3.30.160.60:FF:000410">
    <property type="entry name" value="Zinc finger protein 777"/>
    <property type="match status" value="2"/>
</dbReference>
<dbReference type="FunFam" id="3.30.160.60:FF:000617">
    <property type="entry name" value="Zinc finger protein 777"/>
    <property type="match status" value="1"/>
</dbReference>
<dbReference type="FunFam" id="3.30.160.60:FF:001210">
    <property type="entry name" value="zinc finger protein 777"/>
    <property type="match status" value="1"/>
</dbReference>
<dbReference type="FunFam" id="3.30.160.60:FF:001435">
    <property type="entry name" value="zinc finger protein 777"/>
    <property type="match status" value="1"/>
</dbReference>
<dbReference type="FunFam" id="3.30.160.60:FF:001701">
    <property type="entry name" value="zinc finger protein 777"/>
    <property type="match status" value="1"/>
</dbReference>
<dbReference type="Gene3D" id="6.10.140.140">
    <property type="match status" value="1"/>
</dbReference>
<dbReference type="Gene3D" id="3.30.160.60">
    <property type="entry name" value="Classic Zinc Finger"/>
    <property type="match status" value="9"/>
</dbReference>
<dbReference type="InterPro" id="IPR001909">
    <property type="entry name" value="KRAB"/>
</dbReference>
<dbReference type="InterPro" id="IPR036051">
    <property type="entry name" value="KRAB_dom_sf"/>
</dbReference>
<dbReference type="InterPro" id="IPR050331">
    <property type="entry name" value="Zinc_finger"/>
</dbReference>
<dbReference type="InterPro" id="IPR036236">
    <property type="entry name" value="Znf_C2H2_sf"/>
</dbReference>
<dbReference type="InterPro" id="IPR013087">
    <property type="entry name" value="Znf_C2H2_type"/>
</dbReference>
<dbReference type="PANTHER" id="PTHR16515:SF50">
    <property type="entry name" value="GASTRULA ZINC FINGER PROTEIN XLCGF57.1-LIKE"/>
    <property type="match status" value="1"/>
</dbReference>
<dbReference type="PANTHER" id="PTHR16515">
    <property type="entry name" value="PR DOMAIN ZINC FINGER PROTEIN"/>
    <property type="match status" value="1"/>
</dbReference>
<dbReference type="Pfam" id="PF01352">
    <property type="entry name" value="KRAB"/>
    <property type="match status" value="1"/>
</dbReference>
<dbReference type="Pfam" id="PF00096">
    <property type="entry name" value="zf-C2H2"/>
    <property type="match status" value="9"/>
</dbReference>
<dbReference type="SMART" id="SM00349">
    <property type="entry name" value="KRAB"/>
    <property type="match status" value="1"/>
</dbReference>
<dbReference type="SMART" id="SM00355">
    <property type="entry name" value="ZnF_C2H2"/>
    <property type="match status" value="9"/>
</dbReference>
<dbReference type="SUPFAM" id="SSF57667">
    <property type="entry name" value="beta-beta-alpha zinc fingers"/>
    <property type="match status" value="5"/>
</dbReference>
<dbReference type="SUPFAM" id="SSF109640">
    <property type="entry name" value="KRAB domain (Kruppel-associated box)"/>
    <property type="match status" value="1"/>
</dbReference>
<dbReference type="PROSITE" id="PS50805">
    <property type="entry name" value="KRAB"/>
    <property type="match status" value="1"/>
</dbReference>
<dbReference type="PROSITE" id="PS00028">
    <property type="entry name" value="ZINC_FINGER_C2H2_1"/>
    <property type="match status" value="9"/>
</dbReference>
<dbReference type="PROSITE" id="PS50157">
    <property type="entry name" value="ZINC_FINGER_C2H2_2"/>
    <property type="match status" value="9"/>
</dbReference>
<name>ZN777_HUMAN</name>
<keyword id="KW-0238">DNA-binding</keyword>
<keyword id="KW-1017">Isopeptide bond</keyword>
<keyword id="KW-0479">Metal-binding</keyword>
<keyword id="KW-0539">Nucleus</keyword>
<keyword id="KW-0597">Phosphoprotein</keyword>
<keyword id="KW-1267">Proteomics identification</keyword>
<keyword id="KW-1185">Reference proteome</keyword>
<keyword id="KW-0677">Repeat</keyword>
<keyword id="KW-0804">Transcription</keyword>
<keyword id="KW-0805">Transcription regulation</keyword>
<keyword id="KW-0832">Ubl conjugation</keyword>
<keyword id="KW-0862">Zinc</keyword>
<keyword id="KW-0863">Zinc-finger</keyword>